<dbReference type="EC" id="5.6.1.7" evidence="1"/>
<dbReference type="EMBL" id="AJ439083">
    <property type="protein sequence ID" value="CAD27795.1"/>
    <property type="molecule type" value="Genomic_DNA"/>
</dbReference>
<dbReference type="SMR" id="Q8KIX4"/>
<dbReference type="GO" id="GO:0005737">
    <property type="term" value="C:cytoplasm"/>
    <property type="evidence" value="ECO:0007669"/>
    <property type="project" value="UniProtKB-SubCell"/>
</dbReference>
<dbReference type="GO" id="GO:0005524">
    <property type="term" value="F:ATP binding"/>
    <property type="evidence" value="ECO:0007669"/>
    <property type="project" value="UniProtKB-UniRule"/>
</dbReference>
<dbReference type="GO" id="GO:0140662">
    <property type="term" value="F:ATP-dependent protein folding chaperone"/>
    <property type="evidence" value="ECO:0007669"/>
    <property type="project" value="InterPro"/>
</dbReference>
<dbReference type="GO" id="GO:0016853">
    <property type="term" value="F:isomerase activity"/>
    <property type="evidence" value="ECO:0007669"/>
    <property type="project" value="UniProtKB-KW"/>
</dbReference>
<dbReference type="GO" id="GO:0051082">
    <property type="term" value="F:unfolded protein binding"/>
    <property type="evidence" value="ECO:0007669"/>
    <property type="project" value="UniProtKB-UniRule"/>
</dbReference>
<dbReference type="GO" id="GO:0042026">
    <property type="term" value="P:protein refolding"/>
    <property type="evidence" value="ECO:0007669"/>
    <property type="project" value="UniProtKB-UniRule"/>
</dbReference>
<dbReference type="CDD" id="cd03344">
    <property type="entry name" value="GroEL"/>
    <property type="match status" value="1"/>
</dbReference>
<dbReference type="FunFam" id="1.10.560.10:FF:000001">
    <property type="entry name" value="60 kDa chaperonin"/>
    <property type="match status" value="1"/>
</dbReference>
<dbReference type="FunFam" id="3.50.7.10:FF:000001">
    <property type="entry name" value="60 kDa chaperonin"/>
    <property type="match status" value="1"/>
</dbReference>
<dbReference type="Gene3D" id="3.50.7.10">
    <property type="entry name" value="GroEL"/>
    <property type="match status" value="1"/>
</dbReference>
<dbReference type="Gene3D" id="1.10.560.10">
    <property type="entry name" value="GroEL-like equatorial domain"/>
    <property type="match status" value="1"/>
</dbReference>
<dbReference type="Gene3D" id="3.30.260.10">
    <property type="entry name" value="TCP-1-like chaperonin intermediate domain"/>
    <property type="match status" value="1"/>
</dbReference>
<dbReference type="HAMAP" id="MF_00600">
    <property type="entry name" value="CH60"/>
    <property type="match status" value="1"/>
</dbReference>
<dbReference type="InterPro" id="IPR018370">
    <property type="entry name" value="Chaperonin_Cpn60_CS"/>
</dbReference>
<dbReference type="InterPro" id="IPR001844">
    <property type="entry name" value="Cpn60/GroEL"/>
</dbReference>
<dbReference type="InterPro" id="IPR002423">
    <property type="entry name" value="Cpn60/GroEL/TCP-1"/>
</dbReference>
<dbReference type="InterPro" id="IPR027409">
    <property type="entry name" value="GroEL-like_apical_dom_sf"/>
</dbReference>
<dbReference type="InterPro" id="IPR027413">
    <property type="entry name" value="GROEL-like_equatorial_sf"/>
</dbReference>
<dbReference type="InterPro" id="IPR027410">
    <property type="entry name" value="TCP-1-like_intermed_sf"/>
</dbReference>
<dbReference type="NCBIfam" id="TIGR02348">
    <property type="entry name" value="GroEL"/>
    <property type="match status" value="1"/>
</dbReference>
<dbReference type="NCBIfam" id="NF000592">
    <property type="entry name" value="PRK00013.1"/>
    <property type="match status" value="1"/>
</dbReference>
<dbReference type="NCBIfam" id="NF009487">
    <property type="entry name" value="PRK12849.1"/>
    <property type="match status" value="1"/>
</dbReference>
<dbReference type="NCBIfam" id="NF009488">
    <property type="entry name" value="PRK12850.1"/>
    <property type="match status" value="1"/>
</dbReference>
<dbReference type="NCBIfam" id="NF009489">
    <property type="entry name" value="PRK12851.1"/>
    <property type="match status" value="1"/>
</dbReference>
<dbReference type="PANTHER" id="PTHR45633">
    <property type="entry name" value="60 KDA HEAT SHOCK PROTEIN, MITOCHONDRIAL"/>
    <property type="match status" value="1"/>
</dbReference>
<dbReference type="Pfam" id="PF00118">
    <property type="entry name" value="Cpn60_TCP1"/>
    <property type="match status" value="1"/>
</dbReference>
<dbReference type="PRINTS" id="PR00298">
    <property type="entry name" value="CHAPERONIN60"/>
</dbReference>
<dbReference type="SUPFAM" id="SSF52029">
    <property type="entry name" value="GroEL apical domain-like"/>
    <property type="match status" value="1"/>
</dbReference>
<dbReference type="SUPFAM" id="SSF48592">
    <property type="entry name" value="GroEL equatorial domain-like"/>
    <property type="match status" value="1"/>
</dbReference>
<dbReference type="SUPFAM" id="SSF54849">
    <property type="entry name" value="GroEL-intermediate domain like"/>
    <property type="match status" value="1"/>
</dbReference>
<dbReference type="PROSITE" id="PS00296">
    <property type="entry name" value="CHAPERONINS_CPN60"/>
    <property type="match status" value="1"/>
</dbReference>
<feature type="chain" id="PRO_0000063310" description="Chaperonin GroEL">
    <location>
        <begin position="1"/>
        <end position="548"/>
    </location>
</feature>
<feature type="region of interest" description="Disordered" evidence="2">
    <location>
        <begin position="526"/>
        <end position="548"/>
    </location>
</feature>
<feature type="compositionally biased region" description="Gly residues" evidence="2">
    <location>
        <begin position="537"/>
        <end position="548"/>
    </location>
</feature>
<feature type="binding site" evidence="1">
    <location>
        <begin position="30"/>
        <end position="33"/>
    </location>
    <ligand>
        <name>ATP</name>
        <dbReference type="ChEBI" id="CHEBI:30616"/>
    </ligand>
</feature>
<feature type="binding site" evidence="1">
    <location>
        <position position="51"/>
    </location>
    <ligand>
        <name>ATP</name>
        <dbReference type="ChEBI" id="CHEBI:30616"/>
    </ligand>
</feature>
<feature type="binding site" evidence="1">
    <location>
        <begin position="87"/>
        <end position="91"/>
    </location>
    <ligand>
        <name>ATP</name>
        <dbReference type="ChEBI" id="CHEBI:30616"/>
    </ligand>
</feature>
<feature type="binding site" evidence="1">
    <location>
        <position position="415"/>
    </location>
    <ligand>
        <name>ATP</name>
        <dbReference type="ChEBI" id="CHEBI:30616"/>
    </ligand>
</feature>
<feature type="binding site" evidence="1">
    <location>
        <begin position="479"/>
        <end position="481"/>
    </location>
    <ligand>
        <name>ATP</name>
        <dbReference type="ChEBI" id="CHEBI:30616"/>
    </ligand>
</feature>
<feature type="binding site" evidence="1">
    <location>
        <position position="495"/>
    </location>
    <ligand>
        <name>ATP</name>
        <dbReference type="ChEBI" id="CHEBI:30616"/>
    </ligand>
</feature>
<evidence type="ECO:0000255" key="1">
    <source>
        <dbReference type="HAMAP-Rule" id="MF_00600"/>
    </source>
</evidence>
<evidence type="ECO:0000256" key="2">
    <source>
        <dbReference type="SAM" id="MobiDB-lite"/>
    </source>
</evidence>
<reference key="1">
    <citation type="journal article" date="2002" name="Mol. Biol. Evol.">
        <title>The evolution of the heat-shock protein GroEL from Buchnera, the primary endosymbiont of aphids, is governed by positive selection.</title>
        <authorList>
            <person name="Fares M.A."/>
            <person name="Barrio E."/>
            <person name="Sabater-Munoz B."/>
            <person name="Moya A."/>
        </authorList>
    </citation>
    <scope>NUCLEOTIDE SEQUENCE [GENOMIC DNA]</scope>
</reference>
<comment type="function">
    <text evidence="1">Together with its co-chaperonin GroES, plays an essential role in assisting protein folding. The GroEL-GroES system forms a nano-cage that allows encapsulation of the non-native substrate proteins and provides a physical environment optimized to promote and accelerate protein folding.</text>
</comment>
<comment type="catalytic activity">
    <reaction evidence="1">
        <text>ATP + H2O + a folded polypeptide = ADP + phosphate + an unfolded polypeptide.</text>
        <dbReference type="EC" id="5.6.1.7"/>
    </reaction>
</comment>
<comment type="subunit">
    <text evidence="1">Forms a cylinder of 14 subunits composed of two heptameric rings stacked back-to-back. Interacts with the co-chaperonin GroES.</text>
</comment>
<comment type="subcellular location">
    <subcellularLocation>
        <location evidence="1">Cytoplasm</location>
    </subcellularLocation>
</comment>
<comment type="similarity">
    <text evidence="1">Belongs to the chaperonin (HSP60) family.</text>
</comment>
<organism>
    <name type="scientific">Buchnera aphidicola subsp. Pterocomma populeum</name>
    <dbReference type="NCBI Taxonomy" id="98792"/>
    <lineage>
        <taxon>Bacteria</taxon>
        <taxon>Pseudomonadati</taxon>
        <taxon>Pseudomonadota</taxon>
        <taxon>Gammaproteobacteria</taxon>
        <taxon>Enterobacterales</taxon>
        <taxon>Erwiniaceae</taxon>
        <taxon>Buchnera</taxon>
    </lineage>
</organism>
<sequence>MAAKDVKFGNEARIKMLRGVNVLADAVKVTLGPKGRNVVLDKSFGAPSITKDGVSVAREIELEDKFENMGAQMVKEVASKANDAAGDGTTTATLLAQSIVNEGLKAVAAGMNPMDLKRGIDKAVISAVEELKNLSVTCSDSKAITQVGTISANADEKVGSLIAEAMEKVGNDGVITVEEGTGLQDELEVVKGMQFDRGYLSPYFINKSETGIVELENPYILMADKKISNIREMLPILESVAKSGKPLLIISEDLEGEALATLVVNSMRGIVKVAAVKAPGFGDCRKAMLQDISILTNGTVISEELAMELEKSTLEDLGQAKRVVISKDTTTIIGGVGEKHAIQARINQIRQEIQDASSDYDKEKLNERLAKLAGGVAVLKVGAATEVEMKEKKARVEDALHATRAAVEEGVVAGGGVALVRVAGKLSNLRGQNEDQNVGIRVALRAMEAPLRQIVSNSGEEPSAVTNNVKDGKGNYGYNAATDEYGDMIDFGILDPTKVTRSALQYAGSVAGLMITTECMVTDLPKEDKSSDLGSAPAGGMGGMGGMM</sequence>
<gene>
    <name evidence="1" type="primary">groEL</name>
    <name evidence="1" type="synonym">groL</name>
</gene>
<name>CH60_BUCPP</name>
<protein>
    <recommendedName>
        <fullName evidence="1">Chaperonin GroEL</fullName>
        <ecNumber evidence="1">5.6.1.7</ecNumber>
    </recommendedName>
    <alternativeName>
        <fullName evidence="1">60 kDa chaperonin</fullName>
    </alternativeName>
    <alternativeName>
        <fullName evidence="1">Chaperonin-60</fullName>
        <shortName evidence="1">Cpn60</shortName>
    </alternativeName>
</protein>
<accession>Q8KIX4</accession>
<proteinExistence type="inferred from homology"/>
<keyword id="KW-0067">ATP-binding</keyword>
<keyword id="KW-0143">Chaperone</keyword>
<keyword id="KW-0963">Cytoplasm</keyword>
<keyword id="KW-0413">Isomerase</keyword>
<keyword id="KW-0547">Nucleotide-binding</keyword>